<keyword id="KW-0131">Cell cycle</keyword>
<keyword id="KW-0963">Cytoplasm</keyword>
<keyword id="KW-0235">DNA replication</keyword>
<keyword id="KW-0539">Nucleus</keyword>
<keyword id="KW-1185">Reference proteome</keyword>
<gene>
    <name type="primary">SLD2</name>
    <name type="ordered locus">CAALFM_CR03340CA</name>
    <name type="ORF">CaO19.2389</name>
    <name type="ORF">CaO19.9925</name>
</gene>
<evidence type="ECO:0000250" key="1"/>
<evidence type="ECO:0000256" key="2">
    <source>
        <dbReference type="SAM" id="MobiDB-lite"/>
    </source>
</evidence>
<evidence type="ECO:0000305" key="3"/>
<proteinExistence type="inferred from homology"/>
<dbReference type="EMBL" id="CP017630">
    <property type="protein sequence ID" value="AOW31072.1"/>
    <property type="molecule type" value="Genomic_DNA"/>
</dbReference>
<dbReference type="RefSeq" id="XP_713222.1">
    <property type="nucleotide sequence ID" value="XM_708129.1"/>
</dbReference>
<dbReference type="SMR" id="Q59UH5"/>
<dbReference type="BioGRID" id="1228169">
    <property type="interactions" value="1"/>
</dbReference>
<dbReference type="FunCoup" id="Q59UH5">
    <property type="interactions" value="59"/>
</dbReference>
<dbReference type="STRING" id="237561.Q59UH5"/>
<dbReference type="EnsemblFungi" id="CR_03340C_A-T">
    <property type="protein sequence ID" value="CR_03340C_A-T-p1"/>
    <property type="gene ID" value="CR_03340C_A"/>
</dbReference>
<dbReference type="GeneID" id="3645144"/>
<dbReference type="KEGG" id="cal:CAALFM_CR03340CA"/>
<dbReference type="CGD" id="CAL0000193696">
    <property type="gene designation" value="orf19.9925"/>
</dbReference>
<dbReference type="VEuPathDB" id="FungiDB:CR_03340C_A"/>
<dbReference type="eggNOG" id="ENOG502SCF7">
    <property type="taxonomic scope" value="Eukaryota"/>
</dbReference>
<dbReference type="HOGENOM" id="CLU_667493_0_0_1"/>
<dbReference type="InParanoid" id="Q59UH5"/>
<dbReference type="OrthoDB" id="8775810at2759"/>
<dbReference type="PRO" id="PR:Q59UH5"/>
<dbReference type="Proteomes" id="UP000000559">
    <property type="component" value="Chromosome R"/>
</dbReference>
<dbReference type="GO" id="GO:0005737">
    <property type="term" value="C:cytoplasm"/>
    <property type="evidence" value="ECO:0007669"/>
    <property type="project" value="UniProtKB-SubCell"/>
</dbReference>
<dbReference type="GO" id="GO:0031261">
    <property type="term" value="C:DNA replication preinitiation complex"/>
    <property type="evidence" value="ECO:0000318"/>
    <property type="project" value="GO_Central"/>
</dbReference>
<dbReference type="GO" id="GO:0003688">
    <property type="term" value="F:DNA replication origin binding"/>
    <property type="evidence" value="ECO:0000318"/>
    <property type="project" value="GO_Central"/>
</dbReference>
<dbReference type="GO" id="GO:0003697">
    <property type="term" value="F:single-stranded DNA binding"/>
    <property type="evidence" value="ECO:0000318"/>
    <property type="project" value="GO_Central"/>
</dbReference>
<dbReference type="GO" id="GO:0006270">
    <property type="term" value="P:DNA replication initiation"/>
    <property type="evidence" value="ECO:0000318"/>
    <property type="project" value="GO_Central"/>
</dbReference>
<dbReference type="GO" id="GO:0000727">
    <property type="term" value="P:double-strand break repair via break-induced replication"/>
    <property type="evidence" value="ECO:0000318"/>
    <property type="project" value="GO_Central"/>
</dbReference>
<dbReference type="GO" id="GO:1902977">
    <property type="term" value="P:mitotic DNA replication preinitiation complex assembly"/>
    <property type="evidence" value="ECO:0000318"/>
    <property type="project" value="GO_Central"/>
</dbReference>
<dbReference type="CDD" id="cd22289">
    <property type="entry name" value="RecQL4_SLD2_NTD"/>
    <property type="match status" value="1"/>
</dbReference>
<dbReference type="FunFam" id="1.10.10.1460:FF:000001">
    <property type="entry name" value="DNA replication regulator Sld2"/>
    <property type="match status" value="1"/>
</dbReference>
<dbReference type="Gene3D" id="1.10.10.1460">
    <property type="match status" value="1"/>
</dbReference>
<dbReference type="InterPro" id="IPR021110">
    <property type="entry name" value="DNA_rep_checkpnt_protein"/>
</dbReference>
<dbReference type="InterPro" id="IPR040203">
    <property type="entry name" value="Sld2"/>
</dbReference>
<dbReference type="PANTHER" id="PTHR28124">
    <property type="entry name" value="DNA REPLICATION REGULATOR SLD2"/>
    <property type="match status" value="1"/>
</dbReference>
<dbReference type="PANTHER" id="PTHR28124:SF1">
    <property type="entry name" value="DNA REPLICATION REGULATOR SLD2"/>
    <property type="match status" value="1"/>
</dbReference>
<dbReference type="Pfam" id="PF11719">
    <property type="entry name" value="Drc1-Sld2"/>
    <property type="match status" value="1"/>
</dbReference>
<protein>
    <recommendedName>
        <fullName>DNA replication regulator SLD2</fullName>
    </recommendedName>
</protein>
<accession>Q59UH5</accession>
<accession>A0A1D8PSF0</accession>
<sequence length="354" mass="40672">MDIVEIKSKIKEWEYAFRKQHNKLPSKADIKDDVEIHKLYSLYKSIKSGQQQKPSKQETVNEPASVQSSPVKRNDYSPRGELGPTPQANGRVLSIFDLKMTPPDSSPLKHKSDKASPSAFAMPPPQSPVKNIIETPTKSKNKSFVTPIKGRKIVFETPSYLNKHRQNPQTPDSHNNNNNNNNNTVINFSVSPSPFKTQRSIGKRLTEVYNTSLKEAEDLKSFNLEEEFQSHEEQESEETETTTNNDRKIAPRSKRTQKRSTRRVKMAPRPVNSKPSLENVNLQDHITKLEEGERKQLVAYMDSDEDDENRDGEVGIASVFESPTKKTRMPVSNNFKRLKINDPRSRRFKQRMRR</sequence>
<reference key="1">
    <citation type="journal article" date="2004" name="Proc. Natl. Acad. Sci. U.S.A.">
        <title>The diploid genome sequence of Candida albicans.</title>
        <authorList>
            <person name="Jones T."/>
            <person name="Federspiel N.A."/>
            <person name="Chibana H."/>
            <person name="Dungan J."/>
            <person name="Kalman S."/>
            <person name="Magee B.B."/>
            <person name="Newport G."/>
            <person name="Thorstenson Y.R."/>
            <person name="Agabian N."/>
            <person name="Magee P.T."/>
            <person name="Davis R.W."/>
            <person name="Scherer S."/>
        </authorList>
    </citation>
    <scope>NUCLEOTIDE SEQUENCE [LARGE SCALE GENOMIC DNA]</scope>
    <source>
        <strain>SC5314 / ATCC MYA-2876</strain>
    </source>
</reference>
<reference key="2">
    <citation type="journal article" date="2007" name="Genome Biol.">
        <title>Assembly of the Candida albicans genome into sixteen supercontigs aligned on the eight chromosomes.</title>
        <authorList>
            <person name="van het Hoog M."/>
            <person name="Rast T.J."/>
            <person name="Martchenko M."/>
            <person name="Grindle S."/>
            <person name="Dignard D."/>
            <person name="Hogues H."/>
            <person name="Cuomo C."/>
            <person name="Berriman M."/>
            <person name="Scherer S."/>
            <person name="Magee B.B."/>
            <person name="Whiteway M."/>
            <person name="Chibana H."/>
            <person name="Nantel A."/>
            <person name="Magee P.T."/>
        </authorList>
    </citation>
    <scope>GENOME REANNOTATION</scope>
    <source>
        <strain>SC5314 / ATCC MYA-2876</strain>
    </source>
</reference>
<reference key="3">
    <citation type="journal article" date="2013" name="Genome Biol.">
        <title>Assembly of a phased diploid Candida albicans genome facilitates allele-specific measurements and provides a simple model for repeat and indel structure.</title>
        <authorList>
            <person name="Muzzey D."/>
            <person name="Schwartz K."/>
            <person name="Weissman J.S."/>
            <person name="Sherlock G."/>
        </authorList>
    </citation>
    <scope>NUCLEOTIDE SEQUENCE [LARGE SCALE GENOMIC DNA]</scope>
    <scope>GENOME REANNOTATION</scope>
    <source>
        <strain>SC5314 / ATCC MYA-2876</strain>
    </source>
</reference>
<name>SLD2_CANAL</name>
<feature type="chain" id="PRO_0000278431" description="DNA replication regulator SLD2">
    <location>
        <begin position="1"/>
        <end position="354"/>
    </location>
</feature>
<feature type="region of interest" description="Disordered" evidence="2">
    <location>
        <begin position="47"/>
        <end position="133"/>
    </location>
</feature>
<feature type="region of interest" description="Disordered" evidence="2">
    <location>
        <begin position="159"/>
        <end position="184"/>
    </location>
</feature>
<feature type="region of interest" description="Disordered" evidence="2">
    <location>
        <begin position="220"/>
        <end position="277"/>
    </location>
</feature>
<feature type="compositionally biased region" description="Polar residues" evidence="2">
    <location>
        <begin position="47"/>
        <end position="71"/>
    </location>
</feature>
<feature type="compositionally biased region" description="Basic residues" evidence="2">
    <location>
        <begin position="250"/>
        <end position="266"/>
    </location>
</feature>
<comment type="function">
    <text evidence="1">Has a role in the initiation of DNA replication. Required at S-phase checkpoint (By similarity).</text>
</comment>
<comment type="subcellular location">
    <subcellularLocation>
        <location>Cytoplasm</location>
    </subcellularLocation>
    <subcellularLocation>
        <location evidence="1">Nucleus</location>
    </subcellularLocation>
</comment>
<comment type="similarity">
    <text evidence="3">Belongs to the SLD2 family.</text>
</comment>
<organism>
    <name type="scientific">Candida albicans (strain SC5314 / ATCC MYA-2876)</name>
    <name type="common">Yeast</name>
    <dbReference type="NCBI Taxonomy" id="237561"/>
    <lineage>
        <taxon>Eukaryota</taxon>
        <taxon>Fungi</taxon>
        <taxon>Dikarya</taxon>
        <taxon>Ascomycota</taxon>
        <taxon>Saccharomycotina</taxon>
        <taxon>Pichiomycetes</taxon>
        <taxon>Debaryomycetaceae</taxon>
        <taxon>Candida/Lodderomyces clade</taxon>
        <taxon>Candida</taxon>
    </lineage>
</organism>